<keyword id="KW-0221">Differentiation</keyword>
<keyword id="KW-1035">Host cytoplasm</keyword>
<keyword id="KW-1185">Reference proteome</keyword>
<keyword id="KW-0964">Secreted</keyword>
<keyword id="KW-0732">Signal</keyword>
<protein>
    <recommendedName>
        <fullName>CLAVATA3/ESR (CLE)-related protein 16D10</fullName>
    </recommendedName>
</protein>
<reference key="1">
    <citation type="journal article" date="2006" name="Proc. Natl. Acad. Sci. U.S.A.">
        <title>Engineering broad root-knot resistance in transgenic plants by RNAi silencing of a conserved and essential root-knot nematode parasitism gene.</title>
        <authorList>
            <person name="Huang G."/>
            <person name="Allen R."/>
            <person name="Davis E.L."/>
            <person name="Baum T.J."/>
            <person name="Hussey R.S."/>
        </authorList>
    </citation>
    <scope>NUCLEOTIDE SEQUENCE [GENOMIC DNA]</scope>
    <scope>FUNCTION</scope>
</reference>
<reference key="2">
    <citation type="journal article" date="2008" name="Curr. Opin. Plant Biol.">
        <title>Diverse and conserved roles of CLE peptides.</title>
        <authorList>
            <person name="Mitchum M.G."/>
            <person name="Wang X."/>
            <person name="Davis E.L."/>
        </authorList>
    </citation>
    <scope>REVIEW</scope>
</reference>
<sequence length="43" mass="4625">MFTNSIKNLIIYLMPLMVTLMLLSVSFVDAGKKPSGPNPGGNN</sequence>
<dbReference type="EMBL" id="DQ841121">
    <property type="protein sequence ID" value="ABI33931.1"/>
    <property type="molecule type" value="Genomic_DNA"/>
</dbReference>
<dbReference type="Proteomes" id="UP000887561">
    <property type="component" value="Unplaced"/>
</dbReference>
<dbReference type="GO" id="GO:0005576">
    <property type="term" value="C:extracellular region"/>
    <property type="evidence" value="ECO:0007669"/>
    <property type="project" value="UniProtKB-SubCell"/>
</dbReference>
<dbReference type="GO" id="GO:0030430">
    <property type="term" value="C:host cell cytoplasm"/>
    <property type="evidence" value="ECO:0007669"/>
    <property type="project" value="UniProtKB-SubCell"/>
</dbReference>
<dbReference type="GO" id="GO:0043655">
    <property type="term" value="C:host extracellular space"/>
    <property type="evidence" value="ECO:0007669"/>
    <property type="project" value="UniProtKB-SubCell"/>
</dbReference>
<dbReference type="GO" id="GO:0030154">
    <property type="term" value="P:cell differentiation"/>
    <property type="evidence" value="ECO:0007669"/>
    <property type="project" value="UniProtKB-KW"/>
</dbReference>
<proteinExistence type="evidence at transcript level"/>
<name>16D10_MELJA</name>
<feature type="signal peptide" evidence="2">
    <location>
        <begin position="1"/>
        <end position="30"/>
    </location>
</feature>
<feature type="chain" id="PRO_0000401217" description="CLAVATA3/ESR (CLE)-related protein 16D10">
    <location>
        <begin position="31"/>
        <end position="43"/>
    </location>
</feature>
<feature type="short sequence motif" description="CLE">
    <location>
        <begin position="31"/>
        <end position="43"/>
    </location>
</feature>
<organism>
    <name type="scientific">Meloidogyne javanica</name>
    <name type="common">Root-knot nematode worm</name>
    <dbReference type="NCBI Taxonomy" id="6303"/>
    <lineage>
        <taxon>Eukaryota</taxon>
        <taxon>Metazoa</taxon>
        <taxon>Ecdysozoa</taxon>
        <taxon>Nematoda</taxon>
        <taxon>Chromadorea</taxon>
        <taxon>Rhabditida</taxon>
        <taxon>Tylenchina</taxon>
        <taxon>Tylenchomorpha</taxon>
        <taxon>Tylenchoidea</taxon>
        <taxon>Meloidogynidae</taxon>
        <taxon>Meloidogyninae</taxon>
        <taxon>Meloidogyne</taxon>
        <taxon>Meloidogyne incognita group</taxon>
    </lineage>
</organism>
<evidence type="ECO:0000250" key="1"/>
<evidence type="ECO:0000255" key="2"/>
<evidence type="ECO:0000269" key="3">
    <source>
    </source>
</evidence>
<evidence type="ECO:0000305" key="4"/>
<accession>Q06JG6</accession>
<gene>
    <name type="primary">16D10</name>
</gene>
<comment type="function">
    <text evidence="3">Plays a role in the differentiation or division of feeding cells (syncytia) induced in plant roots during infection. Promotes host root growth.</text>
</comment>
<comment type="subcellular location">
    <subcellularLocation>
        <location evidence="1">Secreted</location>
    </subcellularLocation>
    <subcellularLocation>
        <location evidence="1">Host cytoplasm</location>
    </subcellularLocation>
    <subcellularLocation>
        <location evidence="1">Host extracellular space</location>
    </subcellularLocation>
    <text evidence="1">Secreted into host root cells via the nematode stylet to transform the recipient cells into enlarged multinucleate feeding cells called giant-cells or syncytia.</text>
</comment>
<comment type="tissue specificity">
    <text>Highly expressed exclusively within the subventral esophageal gland cell during syncytium formation in host plants.</text>
</comment>
<comment type="similarity">
    <text evidence="4">Belongs to the CLV3/ESR signal peptide family.</text>
</comment>